<organism>
    <name type="scientific">Saccharomyces cerevisiae (strain ATCC 204508 / S288c)</name>
    <name type="common">Baker's yeast</name>
    <dbReference type="NCBI Taxonomy" id="559292"/>
    <lineage>
        <taxon>Eukaryota</taxon>
        <taxon>Fungi</taxon>
        <taxon>Dikarya</taxon>
        <taxon>Ascomycota</taxon>
        <taxon>Saccharomycotina</taxon>
        <taxon>Saccharomycetes</taxon>
        <taxon>Saccharomycetales</taxon>
        <taxon>Saccharomycetaceae</taxon>
        <taxon>Saccharomyces</taxon>
    </lineage>
</organism>
<keyword id="KW-0472">Membrane</keyword>
<keyword id="KW-0812">Transmembrane</keyword>
<keyword id="KW-1133">Transmembrane helix</keyword>
<proteinExistence type="uncertain"/>
<protein>
    <recommendedName>
        <fullName>Putative uncharacterized protein YBR089W</fullName>
    </recommendedName>
</protein>
<reference key="1">
    <citation type="journal article" date="1994" name="Yeast">
        <title>Analysis of a 70 kb region on the right arm of yeast chromosome II.</title>
        <authorList>
            <person name="Mannhaupt G."/>
            <person name="Stucka R."/>
            <person name="Ehnle S."/>
            <person name="Vetter I."/>
            <person name="Feldmann H."/>
        </authorList>
    </citation>
    <scope>NUCLEOTIDE SEQUENCE [GENOMIC DNA]</scope>
    <source>
        <strain>ATCC 204508 / S288c</strain>
    </source>
</reference>
<reference key="2">
    <citation type="journal article" date="1994" name="EMBO J.">
        <title>Complete DNA sequence of yeast chromosome II.</title>
        <authorList>
            <person name="Feldmann H."/>
            <person name="Aigle M."/>
            <person name="Aljinovic G."/>
            <person name="Andre B."/>
            <person name="Baclet M.C."/>
            <person name="Barthe C."/>
            <person name="Baur A."/>
            <person name="Becam A.-M."/>
            <person name="Biteau N."/>
            <person name="Boles E."/>
            <person name="Brandt T."/>
            <person name="Brendel M."/>
            <person name="Brueckner M."/>
            <person name="Bussereau F."/>
            <person name="Christiansen C."/>
            <person name="Contreras R."/>
            <person name="Crouzet M."/>
            <person name="Cziepluch C."/>
            <person name="Demolis N."/>
            <person name="Delaveau T."/>
            <person name="Doignon F."/>
            <person name="Domdey H."/>
            <person name="Duesterhus S."/>
            <person name="Dubois E."/>
            <person name="Dujon B."/>
            <person name="El Bakkoury M."/>
            <person name="Entian K.-D."/>
            <person name="Feuermann M."/>
            <person name="Fiers W."/>
            <person name="Fobo G.M."/>
            <person name="Fritz C."/>
            <person name="Gassenhuber J."/>
            <person name="Glansdorff N."/>
            <person name="Goffeau A."/>
            <person name="Grivell L.A."/>
            <person name="de Haan M."/>
            <person name="Hein C."/>
            <person name="Herbert C.J."/>
            <person name="Hollenberg C.P."/>
            <person name="Holmstroem K."/>
            <person name="Jacq C."/>
            <person name="Jacquet M."/>
            <person name="Jauniaux J.-C."/>
            <person name="Jonniaux J.-L."/>
            <person name="Kallesoee T."/>
            <person name="Kiesau P."/>
            <person name="Kirchrath L."/>
            <person name="Koetter P."/>
            <person name="Korol S."/>
            <person name="Liebl S."/>
            <person name="Logghe M."/>
            <person name="Lohan A.J.E."/>
            <person name="Louis E.J."/>
            <person name="Li Z.Y."/>
            <person name="Maat M.J."/>
            <person name="Mallet L."/>
            <person name="Mannhaupt G."/>
            <person name="Messenguy F."/>
            <person name="Miosga T."/>
            <person name="Molemans F."/>
            <person name="Mueller S."/>
            <person name="Nasr F."/>
            <person name="Obermaier B."/>
            <person name="Perea J."/>
            <person name="Pierard A."/>
            <person name="Piravandi E."/>
            <person name="Pohl F.M."/>
            <person name="Pohl T.M."/>
            <person name="Potier S."/>
            <person name="Proft M."/>
            <person name="Purnelle B."/>
            <person name="Ramezani Rad M."/>
            <person name="Rieger M."/>
            <person name="Rose M."/>
            <person name="Schaaff-Gerstenschlaeger I."/>
            <person name="Scherens B."/>
            <person name="Schwarzlose C."/>
            <person name="Skala J."/>
            <person name="Slonimski P.P."/>
            <person name="Smits P.H.M."/>
            <person name="Souciet J.-L."/>
            <person name="Steensma H.Y."/>
            <person name="Stucka R."/>
            <person name="Urrestarazu L.A."/>
            <person name="van der Aart Q.J.M."/>
            <person name="Van Dyck L."/>
            <person name="Vassarotti A."/>
            <person name="Vetter I."/>
            <person name="Vierendeels F."/>
            <person name="Vissers S."/>
            <person name="Wagner G."/>
            <person name="de Wergifosse P."/>
            <person name="Wolfe K.H."/>
            <person name="Zagulski M."/>
            <person name="Zimmermann F.K."/>
            <person name="Mewes H.-W."/>
            <person name="Kleine K."/>
        </authorList>
    </citation>
    <scope>NUCLEOTIDE SEQUENCE [LARGE SCALE GENOMIC DNA]</scope>
    <source>
        <strain>ATCC 204508 / S288c</strain>
    </source>
</reference>
<reference key="3">
    <citation type="journal article" date="2014" name="G3 (Bethesda)">
        <title>The reference genome sequence of Saccharomyces cerevisiae: Then and now.</title>
        <authorList>
            <person name="Engel S.R."/>
            <person name="Dietrich F.S."/>
            <person name="Fisk D.G."/>
            <person name="Binkley G."/>
            <person name="Balakrishnan R."/>
            <person name="Costanzo M.C."/>
            <person name="Dwight S.S."/>
            <person name="Hitz B.C."/>
            <person name="Karra K."/>
            <person name="Nash R.S."/>
            <person name="Weng S."/>
            <person name="Wong E.D."/>
            <person name="Lloyd P."/>
            <person name="Skrzypek M.S."/>
            <person name="Miyasato S.R."/>
            <person name="Simison M."/>
            <person name="Cherry J.M."/>
        </authorList>
    </citation>
    <scope>GENOME REANNOTATION</scope>
    <source>
        <strain>ATCC 204508 / S288c</strain>
    </source>
</reference>
<sequence length="199" mass="22094">MLVSGCSISTNGFIMTEPDPISPSATNFIVSLVIMILIESLNWDKSRTILENSEDGNDRVESYCNSSIFKKSASISINFREYSAIRSFLVSSNNKMMESGVLSAISVNVSVLLPQRRILLSEVRSIPNVTGWSHLYSWKASTPISKETNRTLESSTACAMIPSSLHWKLTNWTQSLKPSIILLKRDASSNFASNIFSLF</sequence>
<feature type="chain" id="PRO_0000202480" description="Putative uncharacterized protein YBR089W">
    <location>
        <begin position="1"/>
        <end position="199"/>
    </location>
</feature>
<feature type="transmembrane region" description="Helical" evidence="1">
    <location>
        <begin position="21"/>
        <end position="38"/>
    </location>
</feature>
<evidence type="ECO:0000255" key="1"/>
<evidence type="ECO:0000305" key="2"/>
<evidence type="ECO:0000305" key="3">
    <source>
    </source>
</evidence>
<name>YBT9_YEAST</name>
<accession>P38252</accession>
<gene>
    <name type="ordered locus">YBR089W</name>
    <name type="ORF">YBR0811A</name>
</gene>
<dbReference type="EMBL" id="X78993">
    <property type="status" value="NOT_ANNOTATED_CDS"/>
    <property type="molecule type" value="Genomic_DNA"/>
</dbReference>
<dbReference type="EMBL" id="Z35957">
    <property type="protein sequence ID" value="CAA85039.1"/>
    <property type="molecule type" value="Genomic_DNA"/>
</dbReference>
<dbReference type="PIR" id="S45957">
    <property type="entry name" value="S45957"/>
</dbReference>
<dbReference type="DIP" id="DIP-5460N"/>
<dbReference type="IntAct" id="P38252">
    <property type="interactions" value="2"/>
</dbReference>
<dbReference type="PaxDb" id="4932-YBR089W"/>
<dbReference type="EnsemblFungi" id="YBR089W_mRNA">
    <property type="protein sequence ID" value="YBR089W"/>
    <property type="gene ID" value="YBR089W"/>
</dbReference>
<dbReference type="AGR" id="SGD:S000000293"/>
<dbReference type="SGD" id="S000000293">
    <property type="gene designation" value="YBR089W"/>
</dbReference>
<dbReference type="HOGENOM" id="CLU_1373184_0_0_1"/>
<dbReference type="GO" id="GO:0016020">
    <property type="term" value="C:membrane"/>
    <property type="evidence" value="ECO:0007669"/>
    <property type="project" value="UniProtKB-SubCell"/>
</dbReference>
<comment type="subcellular location">
    <subcellularLocation>
        <location evidence="2">Membrane</location>
        <topology evidence="2">Single-pass membrane protein</topology>
    </subcellularLocation>
</comment>
<comment type="miscellaneous">
    <text evidence="2">Almost completely overlaps POL30.</text>
</comment>
<comment type="caution">
    <text evidence="3">Product of a dubious gene prediction unlikely to encode a functional protein. Because of that it is not part of the S.cerevisiae S288c complete/reference proteome set.</text>
</comment>